<comment type="catalytic activity">
    <reaction evidence="1">
        <text>tRNA(Cys) + L-cysteine + ATP = L-cysteinyl-tRNA(Cys) + AMP + diphosphate</text>
        <dbReference type="Rhea" id="RHEA:17773"/>
        <dbReference type="Rhea" id="RHEA-COMP:9661"/>
        <dbReference type="Rhea" id="RHEA-COMP:9679"/>
        <dbReference type="ChEBI" id="CHEBI:30616"/>
        <dbReference type="ChEBI" id="CHEBI:33019"/>
        <dbReference type="ChEBI" id="CHEBI:35235"/>
        <dbReference type="ChEBI" id="CHEBI:78442"/>
        <dbReference type="ChEBI" id="CHEBI:78517"/>
        <dbReference type="ChEBI" id="CHEBI:456215"/>
        <dbReference type="EC" id="6.1.1.16"/>
    </reaction>
</comment>
<comment type="cofactor">
    <cofactor evidence="1">
        <name>Zn(2+)</name>
        <dbReference type="ChEBI" id="CHEBI:29105"/>
    </cofactor>
    <text evidence="1">Binds 1 zinc ion per subunit.</text>
</comment>
<comment type="subunit">
    <text evidence="1">Monomer.</text>
</comment>
<comment type="subcellular location">
    <subcellularLocation>
        <location evidence="1">Cytoplasm</location>
    </subcellularLocation>
</comment>
<comment type="similarity">
    <text evidence="1">Belongs to the class-I aminoacyl-tRNA synthetase family.</text>
</comment>
<dbReference type="EC" id="6.1.1.16" evidence="1"/>
<dbReference type="EMBL" id="CP001638">
    <property type="protein sequence ID" value="ACS23030.1"/>
    <property type="molecule type" value="Genomic_DNA"/>
</dbReference>
<dbReference type="SMR" id="C5D3P6"/>
<dbReference type="STRING" id="471223.GWCH70_0090"/>
<dbReference type="KEGG" id="gwc:GWCH70_0090"/>
<dbReference type="eggNOG" id="COG0215">
    <property type="taxonomic scope" value="Bacteria"/>
</dbReference>
<dbReference type="HOGENOM" id="CLU_013528_0_1_9"/>
<dbReference type="OrthoDB" id="9815130at2"/>
<dbReference type="GO" id="GO:0005829">
    <property type="term" value="C:cytosol"/>
    <property type="evidence" value="ECO:0007669"/>
    <property type="project" value="TreeGrafter"/>
</dbReference>
<dbReference type="GO" id="GO:0005524">
    <property type="term" value="F:ATP binding"/>
    <property type="evidence" value="ECO:0007669"/>
    <property type="project" value="UniProtKB-UniRule"/>
</dbReference>
<dbReference type="GO" id="GO:0004817">
    <property type="term" value="F:cysteine-tRNA ligase activity"/>
    <property type="evidence" value="ECO:0007669"/>
    <property type="project" value="UniProtKB-UniRule"/>
</dbReference>
<dbReference type="GO" id="GO:0008270">
    <property type="term" value="F:zinc ion binding"/>
    <property type="evidence" value="ECO:0007669"/>
    <property type="project" value="UniProtKB-UniRule"/>
</dbReference>
<dbReference type="GO" id="GO:0006423">
    <property type="term" value="P:cysteinyl-tRNA aminoacylation"/>
    <property type="evidence" value="ECO:0007669"/>
    <property type="project" value="UniProtKB-UniRule"/>
</dbReference>
<dbReference type="CDD" id="cd00672">
    <property type="entry name" value="CysRS_core"/>
    <property type="match status" value="1"/>
</dbReference>
<dbReference type="FunFam" id="1.20.120.1910:FF:000002">
    <property type="entry name" value="Cysteine--tRNA ligase"/>
    <property type="match status" value="1"/>
</dbReference>
<dbReference type="FunFam" id="3.40.50.620:FF:000009">
    <property type="entry name" value="Cysteine--tRNA ligase"/>
    <property type="match status" value="1"/>
</dbReference>
<dbReference type="Gene3D" id="1.20.120.1910">
    <property type="entry name" value="Cysteine-tRNA ligase, C-terminal anti-codon recognition domain"/>
    <property type="match status" value="1"/>
</dbReference>
<dbReference type="Gene3D" id="3.40.50.620">
    <property type="entry name" value="HUPs"/>
    <property type="match status" value="1"/>
</dbReference>
<dbReference type="HAMAP" id="MF_00041">
    <property type="entry name" value="Cys_tRNA_synth"/>
    <property type="match status" value="1"/>
</dbReference>
<dbReference type="InterPro" id="IPR015803">
    <property type="entry name" value="Cys-tRNA-ligase"/>
</dbReference>
<dbReference type="InterPro" id="IPR015273">
    <property type="entry name" value="Cys-tRNA-synt_Ia_DALR"/>
</dbReference>
<dbReference type="InterPro" id="IPR024909">
    <property type="entry name" value="Cys-tRNA/MSH_ligase"/>
</dbReference>
<dbReference type="InterPro" id="IPR056411">
    <property type="entry name" value="CysS_C"/>
</dbReference>
<dbReference type="InterPro" id="IPR014729">
    <property type="entry name" value="Rossmann-like_a/b/a_fold"/>
</dbReference>
<dbReference type="InterPro" id="IPR032678">
    <property type="entry name" value="tRNA-synt_1_cat_dom"/>
</dbReference>
<dbReference type="InterPro" id="IPR009080">
    <property type="entry name" value="tRNAsynth_Ia_anticodon-bd"/>
</dbReference>
<dbReference type="NCBIfam" id="TIGR00435">
    <property type="entry name" value="cysS"/>
    <property type="match status" value="1"/>
</dbReference>
<dbReference type="PANTHER" id="PTHR10890:SF3">
    <property type="entry name" value="CYSTEINE--TRNA LIGASE, CYTOPLASMIC"/>
    <property type="match status" value="1"/>
</dbReference>
<dbReference type="PANTHER" id="PTHR10890">
    <property type="entry name" value="CYSTEINYL-TRNA SYNTHETASE"/>
    <property type="match status" value="1"/>
</dbReference>
<dbReference type="Pfam" id="PF23493">
    <property type="entry name" value="CysS_C"/>
    <property type="match status" value="1"/>
</dbReference>
<dbReference type="Pfam" id="PF09190">
    <property type="entry name" value="DALR_2"/>
    <property type="match status" value="1"/>
</dbReference>
<dbReference type="Pfam" id="PF01406">
    <property type="entry name" value="tRNA-synt_1e"/>
    <property type="match status" value="1"/>
</dbReference>
<dbReference type="PRINTS" id="PR00983">
    <property type="entry name" value="TRNASYNTHCYS"/>
</dbReference>
<dbReference type="SMART" id="SM00840">
    <property type="entry name" value="DALR_2"/>
    <property type="match status" value="1"/>
</dbReference>
<dbReference type="SUPFAM" id="SSF47323">
    <property type="entry name" value="Anticodon-binding domain of a subclass of class I aminoacyl-tRNA synthetases"/>
    <property type="match status" value="1"/>
</dbReference>
<dbReference type="SUPFAM" id="SSF52374">
    <property type="entry name" value="Nucleotidylyl transferase"/>
    <property type="match status" value="1"/>
</dbReference>
<evidence type="ECO:0000255" key="1">
    <source>
        <dbReference type="HAMAP-Rule" id="MF_00041"/>
    </source>
</evidence>
<proteinExistence type="inferred from homology"/>
<protein>
    <recommendedName>
        <fullName evidence="1">Cysteine--tRNA ligase</fullName>
        <ecNumber evidence="1">6.1.1.16</ecNumber>
    </recommendedName>
    <alternativeName>
        <fullName evidence="1">Cysteinyl-tRNA synthetase</fullName>
        <shortName evidence="1">CysRS</shortName>
    </alternativeName>
</protein>
<feature type="chain" id="PRO_1000202125" description="Cysteine--tRNA ligase">
    <location>
        <begin position="1"/>
        <end position="466"/>
    </location>
</feature>
<feature type="short sequence motif" description="'HIGH' region">
    <location>
        <begin position="32"/>
        <end position="42"/>
    </location>
</feature>
<feature type="short sequence motif" description="'KMSKS' region">
    <location>
        <begin position="267"/>
        <end position="271"/>
    </location>
</feature>
<feature type="binding site" evidence="1">
    <location>
        <position position="30"/>
    </location>
    <ligand>
        <name>Zn(2+)</name>
        <dbReference type="ChEBI" id="CHEBI:29105"/>
    </ligand>
</feature>
<feature type="binding site" evidence="1">
    <location>
        <position position="210"/>
    </location>
    <ligand>
        <name>Zn(2+)</name>
        <dbReference type="ChEBI" id="CHEBI:29105"/>
    </ligand>
</feature>
<feature type="binding site" evidence="1">
    <location>
        <position position="235"/>
    </location>
    <ligand>
        <name>Zn(2+)</name>
        <dbReference type="ChEBI" id="CHEBI:29105"/>
    </ligand>
</feature>
<feature type="binding site" evidence="1">
    <location>
        <position position="239"/>
    </location>
    <ligand>
        <name>Zn(2+)</name>
        <dbReference type="ChEBI" id="CHEBI:29105"/>
    </ligand>
</feature>
<feature type="binding site" evidence="1">
    <location>
        <position position="270"/>
    </location>
    <ligand>
        <name>ATP</name>
        <dbReference type="ChEBI" id="CHEBI:30616"/>
    </ligand>
</feature>
<feature type="modified residue" description="Phosphoserine" evidence="1">
    <location>
        <position position="271"/>
    </location>
</feature>
<gene>
    <name evidence="1" type="primary">cysS</name>
    <name type="ordered locus">GWCH70_0090</name>
</gene>
<sequence length="466" mass="54194">MSSIRLYNTLTRKKELFEPLEPNKVKMYVCGPTVYNYIHIGNARAAIVFDTIRRYLEFRGYEVKYVSNFTDVDDKLIKAARELGEDVPTIAERFIQAYFEDITALGCKKADVHPRVTENIDTIIEFIQTLIDRGYAYEVDGDVYYRTRKFKEYGKLSHQSIDELKAGARIEVGEKKEDPLDFALWKAAKEGEICWDSPWGKGRPGWHIECSAMARKYLGDTIDIHAGGQDLTFPHHENEIAQSEALTGKPFAKYWLHNGYLNINNEKMSKSLGNFVLVHDIIQQIDPQVLRFFMLSVHYRHPINYSEELLESAKKGLERLKTSYFNLKHRLQSSTNLTDDDDQWLARIQEQHEAFIREMDDDFNTANGIAVLFELSKQANLYLLEKNTSERVIHAFLREFEQLLDVLGITLQEEELLDEEIEALIQKRNEARKNRNFALADQIRDELKAKNIILEDTPQGTRWKRG</sequence>
<reference key="1">
    <citation type="submission" date="2009-06" db="EMBL/GenBank/DDBJ databases">
        <title>Complete sequence of chromosome of Geopacillus sp. WCH70.</title>
        <authorList>
            <consortium name="US DOE Joint Genome Institute"/>
            <person name="Lucas S."/>
            <person name="Copeland A."/>
            <person name="Lapidus A."/>
            <person name="Glavina del Rio T."/>
            <person name="Dalin E."/>
            <person name="Tice H."/>
            <person name="Bruce D."/>
            <person name="Goodwin L."/>
            <person name="Pitluck S."/>
            <person name="Chertkov O."/>
            <person name="Brettin T."/>
            <person name="Detter J.C."/>
            <person name="Han C."/>
            <person name="Larimer F."/>
            <person name="Land M."/>
            <person name="Hauser L."/>
            <person name="Kyrpides N."/>
            <person name="Mikhailova N."/>
            <person name="Brumm P."/>
            <person name="Mead D.A."/>
            <person name="Richardson P."/>
        </authorList>
    </citation>
    <scope>NUCLEOTIDE SEQUENCE [LARGE SCALE GENOMIC DNA]</scope>
    <source>
        <strain>WCH70</strain>
    </source>
</reference>
<name>SYC_GEOSW</name>
<accession>C5D3P6</accession>
<keyword id="KW-0030">Aminoacyl-tRNA synthetase</keyword>
<keyword id="KW-0067">ATP-binding</keyword>
<keyword id="KW-0963">Cytoplasm</keyword>
<keyword id="KW-0436">Ligase</keyword>
<keyword id="KW-0479">Metal-binding</keyword>
<keyword id="KW-0547">Nucleotide-binding</keyword>
<keyword id="KW-0597">Phosphoprotein</keyword>
<keyword id="KW-0648">Protein biosynthesis</keyword>
<keyword id="KW-0862">Zinc</keyword>
<organism>
    <name type="scientific">Geobacillus sp. (strain WCH70)</name>
    <dbReference type="NCBI Taxonomy" id="471223"/>
    <lineage>
        <taxon>Bacteria</taxon>
        <taxon>Bacillati</taxon>
        <taxon>Bacillota</taxon>
        <taxon>Bacilli</taxon>
        <taxon>Bacillales</taxon>
        <taxon>Anoxybacillaceae</taxon>
        <taxon>Geobacillus</taxon>
    </lineage>
</organism>